<name>OPPB_MYCTU</name>
<sequence>MTRYLARRLLNYLVLLALASFLTYCLTSLAFSPLESLMQRSPRPPQAVIDAKAHDLGLDRPILARYANWVSHAVRGDFGTTITGQPVGTELGRRIGVSLRLLVVGSVFGTVAGVVIGAWGAIRQYRLSDRVMTTLALLVLSTPTFVVANLLILGALRVNWAVGIQLFDYTGETSPGVAGGVWDRLGDRLQHLILPSLTLALAAAAGFSRYQRNAMLDVLGQDFIRTARAKGLTRRRALLKHGLRTALIPMATLFAYGVAGLVTGAVFVEKIFGWHGMGEWMVRGISTQDTNIVAAITVFSGAVVLLAGLLSDVIYAALDPRVRVS</sequence>
<reference key="1">
    <citation type="journal article" date="1998" name="Nature">
        <title>Deciphering the biology of Mycobacterium tuberculosis from the complete genome sequence.</title>
        <authorList>
            <person name="Cole S.T."/>
            <person name="Brosch R."/>
            <person name="Parkhill J."/>
            <person name="Garnier T."/>
            <person name="Churcher C.M."/>
            <person name="Harris D.E."/>
            <person name="Gordon S.V."/>
            <person name="Eiglmeier K."/>
            <person name="Gas S."/>
            <person name="Barry C.E. III"/>
            <person name="Tekaia F."/>
            <person name="Badcock K."/>
            <person name="Basham D."/>
            <person name="Brown D."/>
            <person name="Chillingworth T."/>
            <person name="Connor R."/>
            <person name="Davies R.M."/>
            <person name="Devlin K."/>
            <person name="Feltwell T."/>
            <person name="Gentles S."/>
            <person name="Hamlin N."/>
            <person name="Holroyd S."/>
            <person name="Hornsby T."/>
            <person name="Jagels K."/>
            <person name="Krogh A."/>
            <person name="McLean J."/>
            <person name="Moule S."/>
            <person name="Murphy L.D."/>
            <person name="Oliver S."/>
            <person name="Osborne J."/>
            <person name="Quail M.A."/>
            <person name="Rajandream M.A."/>
            <person name="Rogers J."/>
            <person name="Rutter S."/>
            <person name="Seeger K."/>
            <person name="Skelton S."/>
            <person name="Squares S."/>
            <person name="Squares R."/>
            <person name="Sulston J.E."/>
            <person name="Taylor K."/>
            <person name="Whitehead S."/>
            <person name="Barrell B.G."/>
        </authorList>
    </citation>
    <scope>NUCLEOTIDE SEQUENCE [LARGE SCALE GENOMIC DNA]</scope>
    <source>
        <strain>ATCC 25618 / H37Rv</strain>
    </source>
</reference>
<reference key="2">
    <citation type="journal article" date="2010" name="PLoS ONE">
        <title>An oligopeptide transporter of Mycobacterium tuberculosis regulates cytokine release and apoptosis of infected macrophages.</title>
        <authorList>
            <person name="Dasgupta A."/>
            <person name="Sureka K."/>
            <person name="Mitra D."/>
            <person name="Saha B."/>
            <person name="Sanyal S."/>
            <person name="Das A.K."/>
            <person name="Chakrabarti P."/>
            <person name="Jackson M."/>
            <person name="Gicquel B."/>
            <person name="Kundu M."/>
            <person name="Basu J."/>
        </authorList>
    </citation>
    <scope>FUNCTION</scope>
    <source>
        <strain>H37Rv</strain>
    </source>
</reference>
<reference key="3">
    <citation type="journal article" date="2011" name="Mol. Cell. Proteomics">
        <title>Proteogenomic analysis of Mycobacterium tuberculosis by high resolution mass spectrometry.</title>
        <authorList>
            <person name="Kelkar D.S."/>
            <person name="Kumar D."/>
            <person name="Kumar P."/>
            <person name="Balakrishnan L."/>
            <person name="Muthusamy B."/>
            <person name="Yadav A.K."/>
            <person name="Shrivastava P."/>
            <person name="Marimuthu A."/>
            <person name="Anand S."/>
            <person name="Sundaram H."/>
            <person name="Kingsbury R."/>
            <person name="Harsha H.C."/>
            <person name="Nair B."/>
            <person name="Prasad T.S."/>
            <person name="Chauhan D.S."/>
            <person name="Katoch K."/>
            <person name="Katoch V.M."/>
            <person name="Kumar P."/>
            <person name="Chaerkady R."/>
            <person name="Ramachandran S."/>
            <person name="Dash D."/>
            <person name="Pandey A."/>
        </authorList>
    </citation>
    <scope>IDENTIFICATION BY MASS SPECTROMETRY [LARGE SCALE ANALYSIS]</scope>
    <source>
        <strain>ATCC 25618 / H37Rv</strain>
    </source>
</reference>
<reference evidence="9 10 11 12" key="4">
    <citation type="journal article" date="2024" name="Nat. Struct. Mol. Biol.">
        <title>An oligopeptide permease, OppABCD, requires an iron-sulfur cluster domain for functionality.</title>
        <authorList>
            <person name="Yang X."/>
            <person name="Hu T."/>
            <person name="Liang J."/>
            <person name="Xiong Z."/>
            <person name="Lin Z."/>
            <person name="Zhao Y."/>
            <person name="Zhou X."/>
            <person name="Gao Y."/>
            <person name="Sun S."/>
            <person name="Yang X."/>
            <person name="Guddat L.W."/>
            <person name="Yang H."/>
            <person name="Rao Z."/>
            <person name="Zhang B."/>
        </authorList>
    </citation>
    <scope>STRUCTURE BY ELECTRON MICROSCOPY (2.98 ANGSTROMS) IN COMPLEXES WITH OPPA; OPPC AND OPPD</scope>
    <scope>FUNCTION</scope>
    <scope>SUBUNIT</scope>
    <scope>SUBCELLULAR LOCATION</scope>
    <source>
        <strain>H37Rv</strain>
    </source>
</reference>
<proteinExistence type="evidence at protein level"/>
<gene>
    <name evidence="5" type="primary">oppB</name>
    <name evidence="8" type="ordered locus">Rv1283c</name>
    <name type="ORF">MTCY373.02c</name>
</gene>
<comment type="function">
    <text evidence="3 4">Part of the ABC transporter complex OppABCD involved in the uptake of oligopeptides (PubMed:20808924, PubMed:38548954). Responsible for the translocation of the substrate across the membrane (PubMed:38548954). Glutathione (GSH) uptake by mycobacteria through the OppABCD system contributes to the depletion of the GSH pool in infected macrophages, which impairs the ability of the macrophage to detoxify methylglyoxal (MG) and contributes to enhanced production of inflammatory cytokines (PubMed:20808924).</text>
</comment>
<comment type="subunit">
    <text evidence="4 7">The complex is composed of an ATP-binding protein (OppD), two transmembrane proteins (OppB and OppC) and a solute-binding protein (OppA).</text>
</comment>
<comment type="subcellular location">
    <subcellularLocation>
        <location evidence="4">Cell inner membrane</location>
        <topology evidence="4">Multi-pass membrane protein</topology>
    </subcellularLocation>
</comment>
<comment type="similarity">
    <text evidence="6">Belongs to the binding-protein-dependent transport system permease family. OppBC subfamily.</text>
</comment>
<accession>P9WFZ7</accession>
<accession>L0T8X5</accession>
<accession>P66966</accession>
<accession>Q10611</accession>
<organism>
    <name type="scientific">Mycobacterium tuberculosis (strain ATCC 25618 / H37Rv)</name>
    <dbReference type="NCBI Taxonomy" id="83332"/>
    <lineage>
        <taxon>Bacteria</taxon>
        <taxon>Bacillati</taxon>
        <taxon>Actinomycetota</taxon>
        <taxon>Actinomycetes</taxon>
        <taxon>Mycobacteriales</taxon>
        <taxon>Mycobacteriaceae</taxon>
        <taxon>Mycobacterium</taxon>
        <taxon>Mycobacterium tuberculosis complex</taxon>
    </lineage>
</organism>
<protein>
    <recommendedName>
        <fullName evidence="6">Oligopeptide transport system permease protein OppB</fullName>
    </recommendedName>
</protein>
<evidence type="ECO:0000255" key="1"/>
<evidence type="ECO:0000255" key="2">
    <source>
        <dbReference type="PROSITE-ProRule" id="PRU00441"/>
    </source>
</evidence>
<evidence type="ECO:0000269" key="3">
    <source>
    </source>
</evidence>
<evidence type="ECO:0000269" key="4">
    <source>
    </source>
</evidence>
<evidence type="ECO:0000303" key="5">
    <source>
    </source>
</evidence>
<evidence type="ECO:0000305" key="6"/>
<evidence type="ECO:0000305" key="7">
    <source>
    </source>
</evidence>
<evidence type="ECO:0000312" key="8">
    <source>
        <dbReference type="EMBL" id="CCP44039.1"/>
    </source>
</evidence>
<evidence type="ECO:0007744" key="9">
    <source>
        <dbReference type="PDB" id="8J5Q"/>
    </source>
</evidence>
<evidence type="ECO:0007744" key="10">
    <source>
        <dbReference type="PDB" id="8J5R"/>
    </source>
</evidence>
<evidence type="ECO:0007744" key="11">
    <source>
        <dbReference type="PDB" id="8J5S"/>
    </source>
</evidence>
<evidence type="ECO:0007744" key="12">
    <source>
        <dbReference type="PDB" id="8J5T"/>
    </source>
</evidence>
<evidence type="ECO:0007829" key="13">
    <source>
        <dbReference type="PDB" id="8J5Q"/>
    </source>
</evidence>
<evidence type="ECO:0007829" key="14">
    <source>
        <dbReference type="PDB" id="8J5S"/>
    </source>
</evidence>
<evidence type="ECO:0007829" key="15">
    <source>
        <dbReference type="PDB" id="8J5T"/>
    </source>
</evidence>
<dbReference type="EMBL" id="AL123456">
    <property type="protein sequence ID" value="CCP44039.1"/>
    <property type="molecule type" value="Genomic_DNA"/>
</dbReference>
<dbReference type="PIR" id="G70771">
    <property type="entry name" value="G70771"/>
</dbReference>
<dbReference type="RefSeq" id="NP_215799.1">
    <property type="nucleotide sequence ID" value="NC_000962.3"/>
</dbReference>
<dbReference type="RefSeq" id="WP_003406613.1">
    <property type="nucleotide sequence ID" value="NZ_NVQJ01000030.1"/>
</dbReference>
<dbReference type="PDB" id="8J5Q">
    <property type="method" value="EM"/>
    <property type="resolution" value="3.25 A"/>
    <property type="chains" value="B=1-325"/>
</dbReference>
<dbReference type="PDB" id="8J5R">
    <property type="method" value="EM"/>
    <property type="resolution" value="3.28 A"/>
    <property type="chains" value="B=1-325"/>
</dbReference>
<dbReference type="PDB" id="8J5S">
    <property type="method" value="EM"/>
    <property type="resolution" value="3.00 A"/>
    <property type="chains" value="B=1-325"/>
</dbReference>
<dbReference type="PDB" id="8J5T">
    <property type="method" value="EM"/>
    <property type="resolution" value="2.98 A"/>
    <property type="chains" value="B=1-325"/>
</dbReference>
<dbReference type="PDBsum" id="8J5Q"/>
<dbReference type="PDBsum" id="8J5R"/>
<dbReference type="PDBsum" id="8J5S"/>
<dbReference type="PDBsum" id="8J5T"/>
<dbReference type="EMDB" id="EMD-35990"/>
<dbReference type="EMDB" id="EMD-35991"/>
<dbReference type="EMDB" id="EMD-35992"/>
<dbReference type="EMDB" id="EMD-35993"/>
<dbReference type="SMR" id="P9WFZ7"/>
<dbReference type="FunCoup" id="P9WFZ7">
    <property type="interactions" value="83"/>
</dbReference>
<dbReference type="STRING" id="83332.Rv1283c"/>
<dbReference type="PaxDb" id="83332-Rv1283c"/>
<dbReference type="GeneID" id="886981"/>
<dbReference type="KEGG" id="mtu:Rv1283c"/>
<dbReference type="KEGG" id="mtv:RVBD_1283c"/>
<dbReference type="TubercuList" id="Rv1283c"/>
<dbReference type="eggNOG" id="COG0601">
    <property type="taxonomic scope" value="Bacteria"/>
</dbReference>
<dbReference type="InParanoid" id="P9WFZ7"/>
<dbReference type="OrthoDB" id="147639at2"/>
<dbReference type="PhylomeDB" id="P9WFZ7"/>
<dbReference type="Reactome" id="R-HSA-1222538">
    <property type="pathway name" value="Tolerance by Mtb to nitric oxide produced by macrophages"/>
</dbReference>
<dbReference type="Proteomes" id="UP000001584">
    <property type="component" value="Chromosome"/>
</dbReference>
<dbReference type="GO" id="GO:0005886">
    <property type="term" value="C:plasma membrane"/>
    <property type="evidence" value="ECO:0000318"/>
    <property type="project" value="GO_Central"/>
</dbReference>
<dbReference type="GO" id="GO:0022857">
    <property type="term" value="F:transmembrane transporter activity"/>
    <property type="evidence" value="ECO:0000318"/>
    <property type="project" value="GO_Central"/>
</dbReference>
<dbReference type="GO" id="GO:0015833">
    <property type="term" value="P:peptide transport"/>
    <property type="evidence" value="ECO:0007669"/>
    <property type="project" value="UniProtKB-KW"/>
</dbReference>
<dbReference type="GO" id="GO:0015031">
    <property type="term" value="P:protein transport"/>
    <property type="evidence" value="ECO:0007669"/>
    <property type="project" value="UniProtKB-KW"/>
</dbReference>
<dbReference type="CDD" id="cd06261">
    <property type="entry name" value="TM_PBP2"/>
    <property type="match status" value="1"/>
</dbReference>
<dbReference type="FunFam" id="1.10.3720.10:FF:000111">
    <property type="entry name" value="Peptide ABC transporter permease protein"/>
    <property type="match status" value="1"/>
</dbReference>
<dbReference type="Gene3D" id="1.10.3720.10">
    <property type="entry name" value="MetI-like"/>
    <property type="match status" value="1"/>
</dbReference>
<dbReference type="InterPro" id="IPR045621">
    <property type="entry name" value="BPD_transp_1_N"/>
</dbReference>
<dbReference type="InterPro" id="IPR000515">
    <property type="entry name" value="MetI-like"/>
</dbReference>
<dbReference type="InterPro" id="IPR035906">
    <property type="entry name" value="MetI-like_sf"/>
</dbReference>
<dbReference type="PANTHER" id="PTHR43163">
    <property type="entry name" value="DIPEPTIDE TRANSPORT SYSTEM PERMEASE PROTEIN DPPB-RELATED"/>
    <property type="match status" value="1"/>
</dbReference>
<dbReference type="PANTHER" id="PTHR43163:SF7">
    <property type="entry name" value="DIPEPTIDE-TRANSPORT INTEGRAL MEMBRANE PROTEIN ABC TRANSPORTER DPPB-RELATED"/>
    <property type="match status" value="1"/>
</dbReference>
<dbReference type="Pfam" id="PF00528">
    <property type="entry name" value="BPD_transp_1"/>
    <property type="match status" value="1"/>
</dbReference>
<dbReference type="Pfam" id="PF19300">
    <property type="entry name" value="BPD_transp_1_N"/>
    <property type="match status" value="1"/>
</dbReference>
<dbReference type="SUPFAM" id="SSF161098">
    <property type="entry name" value="MetI-like"/>
    <property type="match status" value="1"/>
</dbReference>
<dbReference type="PROSITE" id="PS50928">
    <property type="entry name" value="ABC_TM1"/>
    <property type="match status" value="1"/>
</dbReference>
<keyword id="KW-0002">3D-structure</keyword>
<keyword id="KW-0997">Cell inner membrane</keyword>
<keyword id="KW-1003">Cell membrane</keyword>
<keyword id="KW-0472">Membrane</keyword>
<keyword id="KW-0571">Peptide transport</keyword>
<keyword id="KW-0653">Protein transport</keyword>
<keyword id="KW-1185">Reference proteome</keyword>
<keyword id="KW-0812">Transmembrane</keyword>
<keyword id="KW-1133">Transmembrane helix</keyword>
<keyword id="KW-0813">Transport</keyword>
<feature type="chain" id="PRO_0000060291" description="Oligopeptide transport system permease protein OppB">
    <location>
        <begin position="1"/>
        <end position="325"/>
    </location>
</feature>
<feature type="transmembrane region" description="Helical" evidence="1">
    <location>
        <begin position="12"/>
        <end position="32"/>
    </location>
</feature>
<feature type="transmembrane region" description="Helical" evidence="1">
    <location>
        <begin position="102"/>
        <end position="122"/>
    </location>
</feature>
<feature type="transmembrane region" description="Helical" evidence="1">
    <location>
        <begin position="135"/>
        <end position="155"/>
    </location>
</feature>
<feature type="transmembrane region" description="Helical" evidence="1">
    <location>
        <begin position="189"/>
        <end position="208"/>
    </location>
</feature>
<feature type="transmembrane region" description="Helical" evidence="1">
    <location>
        <begin position="248"/>
        <end position="268"/>
    </location>
</feature>
<feature type="transmembrane region" description="Helical" evidence="1">
    <location>
        <begin position="290"/>
        <end position="310"/>
    </location>
</feature>
<feature type="domain" description="ABC transmembrane type-1" evidence="2">
    <location>
        <begin position="102"/>
        <end position="310"/>
    </location>
</feature>
<feature type="helix" evidence="15">
    <location>
        <begin position="2"/>
        <end position="30"/>
    </location>
</feature>
<feature type="helix" evidence="15">
    <location>
        <begin position="35"/>
        <end position="38"/>
    </location>
</feature>
<feature type="helix" evidence="15">
    <location>
        <begin position="47"/>
        <end position="55"/>
    </location>
</feature>
<feature type="turn" evidence="13">
    <location>
        <begin position="56"/>
        <end position="59"/>
    </location>
</feature>
<feature type="helix" evidence="15">
    <location>
        <begin position="62"/>
        <end position="73"/>
    </location>
</feature>
<feature type="turn" evidence="15">
    <location>
        <begin position="74"/>
        <end position="76"/>
    </location>
</feature>
<feature type="helix" evidence="15">
    <location>
        <begin position="88"/>
        <end position="122"/>
    </location>
</feature>
<feature type="strand" evidence="15">
    <location>
        <begin position="123"/>
        <end position="126"/>
    </location>
</feature>
<feature type="helix" evidence="15">
    <location>
        <begin position="127"/>
        <end position="140"/>
    </location>
</feature>
<feature type="helix" evidence="15">
    <location>
        <begin position="144"/>
        <end position="162"/>
    </location>
</feature>
<feature type="strand" evidence="15">
    <location>
        <begin position="170"/>
        <end position="173"/>
    </location>
</feature>
<feature type="helix" evidence="15">
    <location>
        <begin position="183"/>
        <end position="191"/>
    </location>
</feature>
<feature type="helix" evidence="15">
    <location>
        <begin position="193"/>
        <end position="218"/>
    </location>
</feature>
<feature type="helix" evidence="15">
    <location>
        <begin position="223"/>
        <end position="230"/>
    </location>
</feature>
<feature type="helix" evidence="15">
    <location>
        <begin position="234"/>
        <end position="246"/>
    </location>
</feature>
<feature type="turn" evidence="15">
    <location>
        <begin position="247"/>
        <end position="249"/>
    </location>
</feature>
<feature type="helix" evidence="15">
    <location>
        <begin position="250"/>
        <end position="257"/>
    </location>
</feature>
<feature type="strand" evidence="15">
    <location>
        <begin position="258"/>
        <end position="261"/>
    </location>
</feature>
<feature type="turn" evidence="15">
    <location>
        <begin position="262"/>
        <end position="264"/>
    </location>
</feature>
<feature type="helix" evidence="15">
    <location>
        <begin position="266"/>
        <end position="271"/>
    </location>
</feature>
<feature type="strand" evidence="15">
    <location>
        <begin position="276"/>
        <end position="278"/>
    </location>
</feature>
<feature type="helix" evidence="15">
    <location>
        <begin position="279"/>
        <end position="287"/>
    </location>
</feature>
<feature type="helix" evidence="15">
    <location>
        <begin position="290"/>
        <end position="304"/>
    </location>
</feature>
<feature type="turn" evidence="15">
    <location>
        <begin position="305"/>
        <end position="309"/>
    </location>
</feature>
<feature type="helix" evidence="15">
    <location>
        <begin position="310"/>
        <end position="318"/>
    </location>
</feature>
<feature type="turn" evidence="14">
    <location>
        <begin position="320"/>
        <end position="322"/>
    </location>
</feature>